<gene>
    <name evidence="8" type="primary">Atad1</name>
</gene>
<reference key="1">
    <citation type="journal article" date="2005" name="Science">
        <title>The transcriptional landscape of the mammalian genome.</title>
        <authorList>
            <person name="Carninci P."/>
            <person name="Kasukawa T."/>
            <person name="Katayama S."/>
            <person name="Gough J."/>
            <person name="Frith M.C."/>
            <person name="Maeda N."/>
            <person name="Oyama R."/>
            <person name="Ravasi T."/>
            <person name="Lenhard B."/>
            <person name="Wells C."/>
            <person name="Kodzius R."/>
            <person name="Shimokawa K."/>
            <person name="Bajic V.B."/>
            <person name="Brenner S.E."/>
            <person name="Batalov S."/>
            <person name="Forrest A.R."/>
            <person name="Zavolan M."/>
            <person name="Davis M.J."/>
            <person name="Wilming L.G."/>
            <person name="Aidinis V."/>
            <person name="Allen J.E."/>
            <person name="Ambesi-Impiombato A."/>
            <person name="Apweiler R."/>
            <person name="Aturaliya R.N."/>
            <person name="Bailey T.L."/>
            <person name="Bansal M."/>
            <person name="Baxter L."/>
            <person name="Beisel K.W."/>
            <person name="Bersano T."/>
            <person name="Bono H."/>
            <person name="Chalk A.M."/>
            <person name="Chiu K.P."/>
            <person name="Choudhary V."/>
            <person name="Christoffels A."/>
            <person name="Clutterbuck D.R."/>
            <person name="Crowe M.L."/>
            <person name="Dalla E."/>
            <person name="Dalrymple B.P."/>
            <person name="de Bono B."/>
            <person name="Della Gatta G."/>
            <person name="di Bernardo D."/>
            <person name="Down T."/>
            <person name="Engstrom P."/>
            <person name="Fagiolini M."/>
            <person name="Faulkner G."/>
            <person name="Fletcher C.F."/>
            <person name="Fukushima T."/>
            <person name="Furuno M."/>
            <person name="Futaki S."/>
            <person name="Gariboldi M."/>
            <person name="Georgii-Hemming P."/>
            <person name="Gingeras T.R."/>
            <person name="Gojobori T."/>
            <person name="Green R.E."/>
            <person name="Gustincich S."/>
            <person name="Harbers M."/>
            <person name="Hayashi Y."/>
            <person name="Hensch T.K."/>
            <person name="Hirokawa N."/>
            <person name="Hill D."/>
            <person name="Huminiecki L."/>
            <person name="Iacono M."/>
            <person name="Ikeo K."/>
            <person name="Iwama A."/>
            <person name="Ishikawa T."/>
            <person name="Jakt M."/>
            <person name="Kanapin A."/>
            <person name="Katoh M."/>
            <person name="Kawasawa Y."/>
            <person name="Kelso J."/>
            <person name="Kitamura H."/>
            <person name="Kitano H."/>
            <person name="Kollias G."/>
            <person name="Krishnan S.P."/>
            <person name="Kruger A."/>
            <person name="Kummerfeld S.K."/>
            <person name="Kurochkin I.V."/>
            <person name="Lareau L.F."/>
            <person name="Lazarevic D."/>
            <person name="Lipovich L."/>
            <person name="Liu J."/>
            <person name="Liuni S."/>
            <person name="McWilliam S."/>
            <person name="Madan Babu M."/>
            <person name="Madera M."/>
            <person name="Marchionni L."/>
            <person name="Matsuda H."/>
            <person name="Matsuzawa S."/>
            <person name="Miki H."/>
            <person name="Mignone F."/>
            <person name="Miyake S."/>
            <person name="Morris K."/>
            <person name="Mottagui-Tabar S."/>
            <person name="Mulder N."/>
            <person name="Nakano N."/>
            <person name="Nakauchi H."/>
            <person name="Ng P."/>
            <person name="Nilsson R."/>
            <person name="Nishiguchi S."/>
            <person name="Nishikawa S."/>
            <person name="Nori F."/>
            <person name="Ohara O."/>
            <person name="Okazaki Y."/>
            <person name="Orlando V."/>
            <person name="Pang K.C."/>
            <person name="Pavan W.J."/>
            <person name="Pavesi G."/>
            <person name="Pesole G."/>
            <person name="Petrovsky N."/>
            <person name="Piazza S."/>
            <person name="Reed J."/>
            <person name="Reid J.F."/>
            <person name="Ring B.Z."/>
            <person name="Ringwald M."/>
            <person name="Rost B."/>
            <person name="Ruan Y."/>
            <person name="Salzberg S.L."/>
            <person name="Sandelin A."/>
            <person name="Schneider C."/>
            <person name="Schoenbach C."/>
            <person name="Sekiguchi K."/>
            <person name="Semple C.A."/>
            <person name="Seno S."/>
            <person name="Sessa L."/>
            <person name="Sheng Y."/>
            <person name="Shibata Y."/>
            <person name="Shimada H."/>
            <person name="Shimada K."/>
            <person name="Silva D."/>
            <person name="Sinclair B."/>
            <person name="Sperling S."/>
            <person name="Stupka E."/>
            <person name="Sugiura K."/>
            <person name="Sultana R."/>
            <person name="Takenaka Y."/>
            <person name="Taki K."/>
            <person name="Tammoja K."/>
            <person name="Tan S.L."/>
            <person name="Tang S."/>
            <person name="Taylor M.S."/>
            <person name="Tegner J."/>
            <person name="Teichmann S.A."/>
            <person name="Ueda H.R."/>
            <person name="van Nimwegen E."/>
            <person name="Verardo R."/>
            <person name="Wei C.L."/>
            <person name="Yagi K."/>
            <person name="Yamanishi H."/>
            <person name="Zabarovsky E."/>
            <person name="Zhu S."/>
            <person name="Zimmer A."/>
            <person name="Hide W."/>
            <person name="Bult C."/>
            <person name="Grimmond S.M."/>
            <person name="Teasdale R.D."/>
            <person name="Liu E.T."/>
            <person name="Brusic V."/>
            <person name="Quackenbush J."/>
            <person name="Wahlestedt C."/>
            <person name="Mattick J.S."/>
            <person name="Hume D.A."/>
            <person name="Kai C."/>
            <person name="Sasaki D."/>
            <person name="Tomaru Y."/>
            <person name="Fukuda S."/>
            <person name="Kanamori-Katayama M."/>
            <person name="Suzuki M."/>
            <person name="Aoki J."/>
            <person name="Arakawa T."/>
            <person name="Iida J."/>
            <person name="Imamura K."/>
            <person name="Itoh M."/>
            <person name="Kato T."/>
            <person name="Kawaji H."/>
            <person name="Kawagashira N."/>
            <person name="Kawashima T."/>
            <person name="Kojima M."/>
            <person name="Kondo S."/>
            <person name="Konno H."/>
            <person name="Nakano K."/>
            <person name="Ninomiya N."/>
            <person name="Nishio T."/>
            <person name="Okada M."/>
            <person name="Plessy C."/>
            <person name="Shibata K."/>
            <person name="Shiraki T."/>
            <person name="Suzuki S."/>
            <person name="Tagami M."/>
            <person name="Waki K."/>
            <person name="Watahiki A."/>
            <person name="Okamura-Oho Y."/>
            <person name="Suzuki H."/>
            <person name="Kawai J."/>
            <person name="Hayashizaki Y."/>
        </authorList>
    </citation>
    <scope>NUCLEOTIDE SEQUENCE [LARGE SCALE MRNA]</scope>
    <source>
        <strain>C57BL/6J</strain>
        <tissue>Bone marrow</tissue>
        <tissue>Cecum</tissue>
        <tissue>Embryo</tissue>
        <tissue>Lung</tissue>
        <tissue>Testis</tissue>
        <tissue>Tongue</tissue>
    </source>
</reference>
<reference key="2">
    <citation type="journal article" date="2004" name="Genome Res.">
        <title>The status, quality, and expansion of the NIH full-length cDNA project: the Mammalian Gene Collection (MGC).</title>
        <authorList>
            <consortium name="The MGC Project Team"/>
        </authorList>
    </citation>
    <scope>NUCLEOTIDE SEQUENCE [LARGE SCALE MRNA]</scope>
    <source>
        <strain>C57BL/6J</strain>
        <strain>FVB/N</strain>
        <tissue>Brain</tissue>
        <tissue>Mammary tumor</tissue>
    </source>
</reference>
<reference key="3">
    <citation type="journal article" date="2007" name="Mol. Cell. Proteomics">
        <title>Proteomics characterization of mouse kidney peroxisomes by tandem mass spectrometry and protein correlation profiling.</title>
        <authorList>
            <person name="Wiese S."/>
            <person name="Gronemeyer T."/>
            <person name="Ofman R."/>
            <person name="Kunze M."/>
            <person name="Grou C.P."/>
            <person name="Almeida J.A."/>
            <person name="Eisenacher M."/>
            <person name="Stephan C."/>
            <person name="Hayen H."/>
            <person name="Schollenberger L."/>
            <person name="Korosec T."/>
            <person name="Waterham H.R."/>
            <person name="Schliebs W."/>
            <person name="Erdmann R."/>
            <person name="Berger J."/>
            <person name="Meyer H.E."/>
            <person name="Just W."/>
            <person name="Azevedo J.E."/>
            <person name="Wanders R.J."/>
            <person name="Warscheid B."/>
        </authorList>
    </citation>
    <scope>SUBCELLULAR LOCATION</scope>
    <source>
        <tissue>Kidney</tissue>
    </source>
</reference>
<reference key="4">
    <citation type="journal article" date="2007" name="Mol. Cell. Proteomics">
        <title>Mitochondrial phosphoproteome revealed by an improved IMAC method and MS/MS/MS.</title>
        <authorList>
            <person name="Lee J."/>
            <person name="Xu Y."/>
            <person name="Chen Y."/>
            <person name="Sprung R."/>
            <person name="Kim S.C."/>
            <person name="Xie S."/>
            <person name="Zhao Y."/>
        </authorList>
    </citation>
    <scope>PHOSPHORYLATION [LARGE SCALE ANALYSIS] AT SER-322</scope>
    <scope>IDENTIFICATION BY MASS SPECTROMETRY [LARGE SCALE ANALYSIS]</scope>
    <source>
        <tissue>Liver</tissue>
    </source>
</reference>
<reference key="5">
    <citation type="journal article" date="2007" name="Proc. Natl. Acad. Sci. U.S.A.">
        <title>Large-scale phosphorylation analysis of mouse liver.</title>
        <authorList>
            <person name="Villen J."/>
            <person name="Beausoleil S.A."/>
            <person name="Gerber S.A."/>
            <person name="Gygi S.P."/>
        </authorList>
    </citation>
    <scope>IDENTIFICATION BY MASS SPECTROMETRY [LARGE SCALE ANALYSIS]</scope>
    <source>
        <tissue>Liver</tissue>
    </source>
</reference>
<reference key="6">
    <citation type="journal article" date="2010" name="Cell">
        <title>A tissue-specific atlas of mouse protein phosphorylation and expression.</title>
        <authorList>
            <person name="Huttlin E.L."/>
            <person name="Jedrychowski M.P."/>
            <person name="Elias J.E."/>
            <person name="Goswami T."/>
            <person name="Rad R."/>
            <person name="Beausoleil S.A."/>
            <person name="Villen J."/>
            <person name="Haas W."/>
            <person name="Sowa M.E."/>
            <person name="Gygi S.P."/>
        </authorList>
    </citation>
    <scope>IDENTIFICATION BY MASS SPECTROMETRY [LARGE SCALE ANALYSIS]</scope>
    <source>
        <tissue>Brain</tissue>
        <tissue>Brown adipose tissue</tissue>
        <tissue>Heart</tissue>
        <tissue>Kidney</tissue>
        <tissue>Liver</tissue>
        <tissue>Lung</tissue>
        <tissue>Spleen</tissue>
        <tissue>Testis</tissue>
    </source>
</reference>
<reference key="7">
    <citation type="journal article" date="2011" name="Cell">
        <title>The AAA+ ATPase Thorase regulates AMPA receptor-dependent synaptic plasticity and behavior.</title>
        <authorList>
            <person name="Zhang J."/>
            <person name="Wang Y."/>
            <person name="Chi Z."/>
            <person name="Keuss M.J."/>
            <person name="Pai Y.M."/>
            <person name="Kang H.C."/>
            <person name="Shin J.H."/>
            <person name="Bugayenko A."/>
            <person name="Wang H."/>
            <person name="Xiong Y."/>
            <person name="Pletnikov M.V."/>
            <person name="Mattson M.P."/>
            <person name="Dawson T.M."/>
            <person name="Dawson V.L."/>
        </authorList>
    </citation>
    <scope>FUNCTION</scope>
    <scope>INTERACTION WITH GRIA2 AND GRIP1</scope>
    <scope>SUBCELLULAR LOCATION</scope>
    <scope>TISSUE SPECIFICITY</scope>
    <scope>DISRUPTION PHENOTYPE</scope>
</reference>
<keyword id="KW-0002">3D-structure</keyword>
<keyword id="KW-0067">ATP-binding</keyword>
<keyword id="KW-1003">Cell membrane</keyword>
<keyword id="KW-0472">Membrane</keyword>
<keyword id="KW-0496">Mitochondrion</keyword>
<keyword id="KW-1000">Mitochondrion outer membrane</keyword>
<keyword id="KW-0547">Nucleotide-binding</keyword>
<keyword id="KW-0576">Peroxisome</keyword>
<keyword id="KW-0597">Phosphoprotein</keyword>
<keyword id="KW-0628">Postsynaptic cell membrane</keyword>
<keyword id="KW-1185">Reference proteome</keyword>
<keyword id="KW-0770">Synapse</keyword>
<keyword id="KW-1278">Translocase</keyword>
<keyword id="KW-0812">Transmembrane</keyword>
<keyword id="KW-1133">Transmembrane helix</keyword>
<protein>
    <recommendedName>
        <fullName evidence="7">Outer mitochondrial transmembrane helix translocase</fullName>
        <ecNumber evidence="1 2">7.4.2.-</ecNumber>
    </recommendedName>
    <alternativeName>
        <fullName evidence="7">ATPase family AAA domain-containing protein 1</fullName>
    </alternativeName>
    <alternativeName>
        <fullName evidence="6">Thorase</fullName>
    </alternativeName>
</protein>
<accession>Q9D5T0</accession>
<accession>Q3U8V2</accession>
<accession>Q9D7A4</accession>
<sequence length="361" mass="40744">MVHAEAFSRPLSRNEVVGLIFRLTIFGAVTYFTIKWMVDAIDPTRKQKVEAQKQAEKLMKQIGVKNVKLSEYEMSIAAHLVDPLNMHVTWSDIAGLDDVITDLKDTVILPIKKKHLFENSRLLQPPKGVLLYGPPGCGKTLIAKATAKEAGCRFINLQPSTLTDKWYGESQKLAAAVFSLAIKLQPSIIFIDEIDSFLRNRSSSDHEATAMMKAQFMSLWDGLDTDHSCQVIVMGATNRPQDLDSAIMRRMPTRFHINQPALKQREAILKLILKNENVDRHVDLLEVAQETDGFSGSDLKEMCRDAALLCVREYVNSTSEESHDEDEIRPVQQQDLHRAIEKMKKSKDAAFQNVLTHVCLD</sequence>
<comment type="function">
    <text evidence="1 2 5">Outer mitochondrial translocase required to remove mislocalized tail-anchored transmembrane proteins on mitochondria (By similarity). Specifically recognizes and binds tail-anchored transmembrane proteins: acts as a dislocase that mediates the ATP-dependent extraction of mistargeted tail-anchored transmembrane proteins from the mitochondrion outer membrane (By similarity). Also plays a critical role in regulating the surface expression of AMPA receptors (AMPAR), thereby regulating synaptic plasticity and learning and memory (PubMed:21496646). Required for NMDA-stimulated AMPAR internalization and inhibition of GRIA1 and GRIA2 recycling back to the plasma membrane; these activities are ATPase-dependent (PubMed:21496646).</text>
</comment>
<comment type="catalytic activity">
    <reaction evidence="1 2">
        <text>[protein]-with a C-terminal TM segment(out) + ATP + H2O = [protein]-with a C-terminal TM segment(in) + ADP + phosphate + H(+)</text>
        <dbReference type="Rhea" id="RHEA:66168"/>
        <dbReference type="Rhea" id="RHEA-COMP:16963"/>
        <dbReference type="ChEBI" id="CHEBI:15377"/>
        <dbReference type="ChEBI" id="CHEBI:15378"/>
        <dbReference type="ChEBI" id="CHEBI:30616"/>
        <dbReference type="ChEBI" id="CHEBI:43474"/>
        <dbReference type="ChEBI" id="CHEBI:90782"/>
        <dbReference type="ChEBI" id="CHEBI:456216"/>
    </reaction>
</comment>
<comment type="subunit">
    <text evidence="5">Interacts with GRIA2 and GRIP1 in an ATP-dependent manner (PubMed:21496646). ATAD1-catalyzed ATP hydrolysis disrupts not only its binding to GRIA2 and GRIP1, but also interaction between GRIP1 and GRIA2, leading to AMPAR complex disassembly (PubMed:21496646).</text>
</comment>
<comment type="subcellular location">
    <subcellularLocation>
        <location evidence="2">Mitochondrion outer membrane</location>
        <topology evidence="3">Single-pass membrane protein</topology>
    </subcellularLocation>
    <subcellularLocation>
        <location evidence="4">Peroxisome membrane</location>
        <topology evidence="3">Single-pass membrane protein</topology>
    </subcellularLocation>
    <subcellularLocation>
        <location evidence="5">Postsynaptic cell membrane</location>
        <topology evidence="3">Single-pass membrane protein</topology>
    </subcellularLocation>
</comment>
<comment type="tissue specificity">
    <text evidence="5">Widely expressed with the highest expression in the brain and testis. In the brain, relatively high expression in hippocampal CA1 pyramidal cells (at protein level).</text>
</comment>
<comment type="disruption phenotype">
    <text evidence="5">About 80% of the mutant mice die of a seizure-like syndrome between postnatal days 19 and 25; the remaining 20% survive up to 8 weeks of age. No gross abnormalities in tissues analyzed, including heart, lung, spleen, kidney, thymus, liver, intestine, testis, eyes, and muscle. In the CA1 region of the hippocampus, no substantial difference in the dendritic complexity or in the number or size of dendritic spines and normal density of synapses in mutant animals compared to wild-type.</text>
</comment>
<comment type="similarity">
    <text evidence="7">Belongs to the AAA ATPase family. MSP1 subfamily.</text>
</comment>
<evidence type="ECO:0000250" key="1">
    <source>
        <dbReference type="UniProtKB" id="P28737"/>
    </source>
</evidence>
<evidence type="ECO:0000250" key="2">
    <source>
        <dbReference type="UniProtKB" id="Q8NBU5"/>
    </source>
</evidence>
<evidence type="ECO:0000255" key="3"/>
<evidence type="ECO:0000269" key="4">
    <source>
    </source>
</evidence>
<evidence type="ECO:0000269" key="5">
    <source>
    </source>
</evidence>
<evidence type="ECO:0000303" key="6">
    <source>
    </source>
</evidence>
<evidence type="ECO:0000305" key="7"/>
<evidence type="ECO:0000312" key="8">
    <source>
        <dbReference type="MGI" id="MGI:1915229"/>
    </source>
</evidence>
<evidence type="ECO:0007744" key="9">
    <source>
    </source>
</evidence>
<name>ATAD1_MOUSE</name>
<proteinExistence type="evidence at protein level"/>
<organism>
    <name type="scientific">Mus musculus</name>
    <name type="common">Mouse</name>
    <dbReference type="NCBI Taxonomy" id="10090"/>
    <lineage>
        <taxon>Eukaryota</taxon>
        <taxon>Metazoa</taxon>
        <taxon>Chordata</taxon>
        <taxon>Craniata</taxon>
        <taxon>Vertebrata</taxon>
        <taxon>Euteleostomi</taxon>
        <taxon>Mammalia</taxon>
        <taxon>Eutheria</taxon>
        <taxon>Euarchontoglires</taxon>
        <taxon>Glires</taxon>
        <taxon>Rodentia</taxon>
        <taxon>Myomorpha</taxon>
        <taxon>Muroidea</taxon>
        <taxon>Muridae</taxon>
        <taxon>Murinae</taxon>
        <taxon>Mus</taxon>
        <taxon>Mus</taxon>
    </lineage>
</organism>
<feature type="chain" id="PRO_0000084792" description="Outer mitochondrial transmembrane helix translocase">
    <location>
        <begin position="1"/>
        <end position="361"/>
    </location>
</feature>
<feature type="topological domain" description="Mitochondrial intermembrane" evidence="7">
    <location>
        <begin position="1"/>
        <end position="15"/>
    </location>
</feature>
<feature type="transmembrane region" description="Helical" evidence="3">
    <location>
        <begin position="16"/>
        <end position="32"/>
    </location>
</feature>
<feature type="topological domain" description="Cytoplasmic" evidence="7">
    <location>
        <begin position="33"/>
        <end position="361"/>
    </location>
</feature>
<feature type="binding site" evidence="3">
    <location>
        <begin position="133"/>
        <end position="140"/>
    </location>
    <ligand>
        <name>ATP</name>
        <dbReference type="ChEBI" id="CHEBI:30616"/>
    </ligand>
</feature>
<feature type="modified residue" description="Phosphoserine" evidence="9">
    <location>
        <position position="322"/>
    </location>
</feature>
<feature type="sequence conflict" description="In Ref. 1; BAB26274." evidence="7" ref="1">
    <original>L</original>
    <variation>M</variation>
    <location>
        <position position="123"/>
    </location>
</feature>
<feature type="sequence conflict" description="In Ref. 1; BAB26274." evidence="7" ref="1">
    <original>H</original>
    <variation>L</variation>
    <location>
        <position position="206"/>
    </location>
</feature>
<dbReference type="EC" id="7.4.2.-" evidence="1 2"/>
<dbReference type="EMBL" id="AK009419">
    <property type="protein sequence ID" value="BAB26274.1"/>
    <property type="molecule type" value="mRNA"/>
</dbReference>
<dbReference type="EMBL" id="AK014967">
    <property type="protein sequence ID" value="BAB29643.1"/>
    <property type="molecule type" value="mRNA"/>
</dbReference>
<dbReference type="EMBL" id="AK030719">
    <property type="protein sequence ID" value="BAC27097.1"/>
    <property type="molecule type" value="mRNA"/>
</dbReference>
<dbReference type="EMBL" id="AK033639">
    <property type="protein sequence ID" value="BAC28402.1"/>
    <property type="molecule type" value="mRNA"/>
</dbReference>
<dbReference type="EMBL" id="AK150469">
    <property type="protein sequence ID" value="BAE29586.1"/>
    <property type="molecule type" value="mRNA"/>
</dbReference>
<dbReference type="EMBL" id="AK152059">
    <property type="protein sequence ID" value="BAE30915.1"/>
    <property type="molecule type" value="mRNA"/>
</dbReference>
<dbReference type="EMBL" id="AK165953">
    <property type="protein sequence ID" value="BAE38481.1"/>
    <property type="molecule type" value="mRNA"/>
</dbReference>
<dbReference type="EMBL" id="BC029085">
    <property type="protein sequence ID" value="AAH29085.1"/>
    <property type="molecule type" value="mRNA"/>
</dbReference>
<dbReference type="EMBL" id="BC043051">
    <property type="protein sequence ID" value="AAH43051.1"/>
    <property type="molecule type" value="mRNA"/>
</dbReference>
<dbReference type="CCDS" id="CCDS29752.1"/>
<dbReference type="RefSeq" id="NP_080763.2">
    <property type="nucleotide sequence ID" value="NM_026487.3"/>
</dbReference>
<dbReference type="RefSeq" id="XP_006527376.1">
    <property type="nucleotide sequence ID" value="XM_006527313.3"/>
</dbReference>
<dbReference type="PDB" id="8VXT">
    <property type="method" value="EM"/>
    <property type="resolution" value="4.25 A"/>
    <property type="chains" value="A/B/C/D/E/F=41-361"/>
</dbReference>
<dbReference type="PDBsum" id="8VXT"/>
<dbReference type="EMDB" id="EMD-43639"/>
<dbReference type="EMDB" id="EMD-43640"/>
<dbReference type="SMR" id="Q9D5T0"/>
<dbReference type="BioGRID" id="212578">
    <property type="interactions" value="49"/>
</dbReference>
<dbReference type="FunCoup" id="Q9D5T0">
    <property type="interactions" value="1673"/>
</dbReference>
<dbReference type="IntAct" id="Q9D5T0">
    <property type="interactions" value="1"/>
</dbReference>
<dbReference type="STRING" id="10090.ENSMUSP00000157842"/>
<dbReference type="GlyConnect" id="2138">
    <property type="glycosylation" value="2 N-Linked glycans (1 site)"/>
</dbReference>
<dbReference type="GlyCosmos" id="Q9D5T0">
    <property type="glycosylation" value="1 site, 2 glycans"/>
</dbReference>
<dbReference type="GlyGen" id="Q9D5T0">
    <property type="glycosylation" value="2 sites, 3 N-linked glycans (1 site), 1 O-linked glycan (1 site)"/>
</dbReference>
<dbReference type="iPTMnet" id="Q9D5T0"/>
<dbReference type="PhosphoSitePlus" id="Q9D5T0"/>
<dbReference type="SwissPalm" id="Q9D5T0"/>
<dbReference type="jPOST" id="Q9D5T0"/>
<dbReference type="PaxDb" id="10090-ENSMUSP00000069962"/>
<dbReference type="PeptideAtlas" id="Q9D5T0"/>
<dbReference type="ProteomicsDB" id="265136"/>
<dbReference type="Pumba" id="Q9D5T0"/>
<dbReference type="ABCD" id="Q9D5T0">
    <property type="antibodies" value="1 sequenced antibody"/>
</dbReference>
<dbReference type="Antibodypedia" id="49559">
    <property type="antibodies" value="175 antibodies from 26 providers"/>
</dbReference>
<dbReference type="DNASU" id="67979"/>
<dbReference type="Ensembl" id="ENSMUST00000070210.6">
    <property type="protein sequence ID" value="ENSMUSP00000069962.5"/>
    <property type="gene ID" value="ENSMUSG00000013662.7"/>
</dbReference>
<dbReference type="Ensembl" id="ENSMUST00000235412.2">
    <property type="protein sequence ID" value="ENSMUSP00000157842.2"/>
    <property type="gene ID" value="ENSMUSG00000013662.7"/>
</dbReference>
<dbReference type="Ensembl" id="ENSMUST00000236011.2">
    <property type="protein sequence ID" value="ENSMUSP00000157772.2"/>
    <property type="gene ID" value="ENSMUSG00000013662.7"/>
</dbReference>
<dbReference type="Ensembl" id="ENSMUST00000236985.2">
    <property type="protein sequence ID" value="ENSMUSP00000158237.2"/>
    <property type="gene ID" value="ENSMUSG00000013662.7"/>
</dbReference>
<dbReference type="GeneID" id="67979"/>
<dbReference type="KEGG" id="mmu:67979"/>
<dbReference type="UCSC" id="uc008hfo.1">
    <property type="organism name" value="mouse"/>
</dbReference>
<dbReference type="AGR" id="MGI:1915229"/>
<dbReference type="CTD" id="84896"/>
<dbReference type="MGI" id="MGI:1915229">
    <property type="gene designation" value="Atad1"/>
</dbReference>
<dbReference type="VEuPathDB" id="HostDB:ENSMUSG00000013662"/>
<dbReference type="eggNOG" id="KOG0737">
    <property type="taxonomic scope" value="Eukaryota"/>
</dbReference>
<dbReference type="GeneTree" id="ENSGT00550000074823"/>
<dbReference type="HOGENOM" id="CLU_000688_21_14_1"/>
<dbReference type="InParanoid" id="Q9D5T0"/>
<dbReference type="OMA" id="CRNAAMR"/>
<dbReference type="OrthoDB" id="10254455at2759"/>
<dbReference type="PhylomeDB" id="Q9D5T0"/>
<dbReference type="TreeFam" id="TF105016"/>
<dbReference type="Reactome" id="R-MMU-9603798">
    <property type="pathway name" value="Class I peroxisomal membrane protein import"/>
</dbReference>
<dbReference type="BioGRID-ORCS" id="67979">
    <property type="hits" value="7 hits in 78 CRISPR screens"/>
</dbReference>
<dbReference type="CD-CODE" id="CE726F99">
    <property type="entry name" value="Postsynaptic density"/>
</dbReference>
<dbReference type="ChiTaRS" id="Atad1">
    <property type="organism name" value="mouse"/>
</dbReference>
<dbReference type="PRO" id="PR:Q9D5T0"/>
<dbReference type="Proteomes" id="UP000000589">
    <property type="component" value="Chromosome 19"/>
</dbReference>
<dbReference type="RNAct" id="Q9D5T0">
    <property type="molecule type" value="protein"/>
</dbReference>
<dbReference type="Bgee" id="ENSMUSG00000013662">
    <property type="expression patterns" value="Expressed in animal zygote and 279 other cell types or tissues"/>
</dbReference>
<dbReference type="ExpressionAtlas" id="Q9D5T0">
    <property type="expression patterns" value="baseline and differential"/>
</dbReference>
<dbReference type="GO" id="GO:0098978">
    <property type="term" value="C:glutamatergic synapse"/>
    <property type="evidence" value="ECO:0000314"/>
    <property type="project" value="SynGO"/>
</dbReference>
<dbReference type="GO" id="GO:0005741">
    <property type="term" value="C:mitochondrial outer membrane"/>
    <property type="evidence" value="ECO:0000250"/>
    <property type="project" value="UniProtKB"/>
</dbReference>
<dbReference type="GO" id="GO:0005739">
    <property type="term" value="C:mitochondrion"/>
    <property type="evidence" value="ECO:0007005"/>
    <property type="project" value="MGI"/>
</dbReference>
<dbReference type="GO" id="GO:0005778">
    <property type="term" value="C:peroxisomal membrane"/>
    <property type="evidence" value="ECO:0000250"/>
    <property type="project" value="UniProtKB"/>
</dbReference>
<dbReference type="GO" id="GO:0098794">
    <property type="term" value="C:postsynapse"/>
    <property type="evidence" value="ECO:0000314"/>
    <property type="project" value="SynGO"/>
</dbReference>
<dbReference type="GO" id="GO:0045211">
    <property type="term" value="C:postsynaptic membrane"/>
    <property type="evidence" value="ECO:0000314"/>
    <property type="project" value="UniProtKB"/>
</dbReference>
<dbReference type="GO" id="GO:0005524">
    <property type="term" value="F:ATP binding"/>
    <property type="evidence" value="ECO:0007669"/>
    <property type="project" value="UniProtKB-KW"/>
</dbReference>
<dbReference type="GO" id="GO:0016887">
    <property type="term" value="F:ATP hydrolysis activity"/>
    <property type="evidence" value="ECO:0000314"/>
    <property type="project" value="UniProtKB"/>
</dbReference>
<dbReference type="GO" id="GO:0140567">
    <property type="term" value="F:membrane protein dislocase activity"/>
    <property type="evidence" value="ECO:0007669"/>
    <property type="project" value="RHEA"/>
</dbReference>
<dbReference type="GO" id="GO:0140570">
    <property type="term" value="P:extraction of mislocalized protein from mitochondrial outer membrane"/>
    <property type="evidence" value="ECO:0000250"/>
    <property type="project" value="UniProtKB"/>
</dbReference>
<dbReference type="GO" id="GO:0007612">
    <property type="term" value="P:learning"/>
    <property type="evidence" value="ECO:0000315"/>
    <property type="project" value="UniProtKB"/>
</dbReference>
<dbReference type="GO" id="GO:0007613">
    <property type="term" value="P:memory"/>
    <property type="evidence" value="ECO:0000315"/>
    <property type="project" value="UniProtKB"/>
</dbReference>
<dbReference type="GO" id="GO:0051967">
    <property type="term" value="P:negative regulation of synaptic transmission, glutamatergic"/>
    <property type="evidence" value="ECO:0000315"/>
    <property type="project" value="UniProtKB"/>
</dbReference>
<dbReference type="GO" id="GO:0002092">
    <property type="term" value="P:positive regulation of receptor internalization"/>
    <property type="evidence" value="ECO:0000315"/>
    <property type="project" value="UniProtKB"/>
</dbReference>
<dbReference type="GO" id="GO:0099149">
    <property type="term" value="P:regulation of postsynaptic neurotransmitter receptor internalization"/>
    <property type="evidence" value="ECO:0000314"/>
    <property type="project" value="SynGO"/>
</dbReference>
<dbReference type="CDD" id="cd19520">
    <property type="entry name" value="RecA-like_ATAD1"/>
    <property type="match status" value="1"/>
</dbReference>
<dbReference type="FunFam" id="1.10.8.60:FF:000044">
    <property type="entry name" value="ATPase family AAA domain-containing protein 1"/>
    <property type="match status" value="1"/>
</dbReference>
<dbReference type="FunFam" id="3.40.50.300:FF:000538">
    <property type="entry name" value="ATPase family AAA domain-containing protein 1"/>
    <property type="match status" value="1"/>
</dbReference>
<dbReference type="Gene3D" id="1.10.8.60">
    <property type="match status" value="1"/>
</dbReference>
<dbReference type="Gene3D" id="3.40.50.300">
    <property type="entry name" value="P-loop containing nucleotide triphosphate hydrolases"/>
    <property type="match status" value="1"/>
</dbReference>
<dbReference type="InterPro" id="IPR003593">
    <property type="entry name" value="AAA+_ATPase"/>
</dbReference>
<dbReference type="InterPro" id="IPR041569">
    <property type="entry name" value="AAA_lid_3"/>
</dbReference>
<dbReference type="InterPro" id="IPR003959">
    <property type="entry name" value="ATPase_AAA_core"/>
</dbReference>
<dbReference type="InterPro" id="IPR003960">
    <property type="entry name" value="ATPase_AAA_CS"/>
</dbReference>
<dbReference type="InterPro" id="IPR051701">
    <property type="entry name" value="Mito_OM_Translocase_MSP1"/>
</dbReference>
<dbReference type="InterPro" id="IPR027417">
    <property type="entry name" value="P-loop_NTPase"/>
</dbReference>
<dbReference type="PANTHER" id="PTHR45644">
    <property type="entry name" value="AAA ATPASE, PUTATIVE (AFU_ORTHOLOGUE AFUA_2G12920)-RELATED-RELATED"/>
    <property type="match status" value="1"/>
</dbReference>
<dbReference type="PANTHER" id="PTHR45644:SF2">
    <property type="entry name" value="OUTER MITOCHONDRIAL TRANSMEMBRANE HELIX TRANSLOCASE"/>
    <property type="match status" value="1"/>
</dbReference>
<dbReference type="Pfam" id="PF00004">
    <property type="entry name" value="AAA"/>
    <property type="match status" value="1"/>
</dbReference>
<dbReference type="Pfam" id="PF17862">
    <property type="entry name" value="AAA_lid_3"/>
    <property type="match status" value="1"/>
</dbReference>
<dbReference type="SMART" id="SM00382">
    <property type="entry name" value="AAA"/>
    <property type="match status" value="1"/>
</dbReference>
<dbReference type="SUPFAM" id="SSF52540">
    <property type="entry name" value="P-loop containing nucleoside triphosphate hydrolases"/>
    <property type="match status" value="1"/>
</dbReference>
<dbReference type="PROSITE" id="PS00674">
    <property type="entry name" value="AAA"/>
    <property type="match status" value="1"/>
</dbReference>